<protein>
    <recommendedName>
        <fullName>Proteasome subunit alpha type-5</fullName>
    </recommendedName>
    <alternativeName>
        <fullName>Macropain zeta chain</fullName>
    </alternativeName>
    <alternativeName>
        <fullName>Multicatalytic endopeptidase complex zeta chain</fullName>
    </alternativeName>
    <alternativeName>
        <fullName>Proteasome subunit alpha-5</fullName>
        <shortName>alpha-5</shortName>
    </alternativeName>
    <alternativeName>
        <fullName>Proteasome zeta chain</fullName>
    </alternativeName>
</protein>
<gene>
    <name type="primary">Psma5</name>
</gene>
<comment type="function">
    <text evidence="3 5">Component of the 20S core proteasome complex involved in the proteolytic degradation of most intracellular proteins. This complex plays numerous essential roles within the cell by associating with different regulatory particles. Associated with two 19S regulatory particles, forms the 26S proteasome and thus participates in the ATP-dependent degradation of ubiquitinated proteins. The 26S proteasome plays a key role in the maintenance of protein homeostasis by removing misfolded or damaged proteins that could impair cellular functions, and by removing proteins whose functions are no longer required. Associated with the PA200 or PA28, the 20S proteasome mediates ubiquitin-independent protein degradation. This type of proteolysis is required in several pathways including spermatogenesis (20S-PA200 complex) or generation of a subset of MHC class I-presented antigenic peptides (20S-PA28 complex).</text>
</comment>
<comment type="subunit">
    <text evidence="1 4 5">The 26S proteasome consists of a 20S proteasome core and two 19S regulatory subunits. The 20S proteasome core is a barrel-shaped complex made of 28 subunits that are arranged in four stacked rings. The two outer rings are each formed by seven alpha subunits, and the two inner rings are formed by seven beta subunits. The proteolytic activity is exerted by three beta-subunits PSMB5, PSMB6 and PSMB7 (PubMed:16857966, PubMed:22341445). PSMA5 interacts directly with the PSMG1-PSMG2 heterodimer which promotes 20S proteasome assembly (By similarity).</text>
</comment>
<comment type="subcellular location">
    <subcellularLocation>
        <location evidence="1">Cytoplasm</location>
    </subcellularLocation>
    <subcellularLocation>
        <location evidence="1">Nucleus</location>
    </subcellularLocation>
    <text evidence="1">Translocated from the cytoplasm into the nucleus following interaction with AKIRIN2, which bridges the proteasome with the nuclear import receptor IPO9.</text>
</comment>
<comment type="tissue specificity">
    <text evidence="5">Detected in liver (at protein level).</text>
</comment>
<comment type="similarity">
    <text evidence="2">Belongs to the peptidase T1A family.</text>
</comment>
<feature type="chain" id="PRO_0000124118" description="Proteasome subunit alpha type-5">
    <location>
        <begin position="1"/>
        <end position="241"/>
    </location>
</feature>
<feature type="modified residue" description="N-acetylmethionine" evidence="4">
    <location>
        <position position="1"/>
    </location>
</feature>
<feature type="modified residue" description="Phosphoserine" evidence="1">
    <location>
        <position position="16"/>
    </location>
</feature>
<feature type="modified residue" description="Phosphothreonine" evidence="1">
    <location>
        <position position="55"/>
    </location>
</feature>
<feature type="modified residue" description="Phosphoserine" evidence="1">
    <location>
        <position position="56"/>
    </location>
</feature>
<feature type="modified residue" description="Phosphoserine" evidence="1">
    <location>
        <position position="63"/>
    </location>
</feature>
<feature type="glycosylation site" description="O-linked (GlcNAc) serine" evidence="6">
    <location>
        <position position="198"/>
    </location>
</feature>
<feature type="strand" evidence="7">
    <location>
        <begin position="19"/>
        <end position="21"/>
    </location>
</feature>
<feature type="helix" evidence="7">
    <location>
        <begin position="22"/>
        <end position="31"/>
    </location>
</feature>
<feature type="strand" evidence="7">
    <location>
        <begin position="37"/>
        <end position="42"/>
    </location>
</feature>
<feature type="strand" evidence="7">
    <location>
        <begin position="45"/>
        <end position="51"/>
    </location>
</feature>
<feature type="helix" evidence="7">
    <location>
        <begin position="61"/>
        <end position="63"/>
    </location>
</feature>
<feature type="strand" evidence="7">
    <location>
        <begin position="67"/>
        <end position="71"/>
    </location>
</feature>
<feature type="strand" evidence="7">
    <location>
        <begin position="74"/>
        <end position="80"/>
    </location>
</feature>
<feature type="helix" evidence="7">
    <location>
        <begin position="82"/>
        <end position="103"/>
    </location>
</feature>
<feature type="helix" evidence="7">
    <location>
        <begin position="109"/>
        <end position="117"/>
    </location>
</feature>
<feature type="turn" evidence="7">
    <location>
        <begin position="118"/>
        <end position="121"/>
    </location>
</feature>
<feature type="strand" evidence="8">
    <location>
        <begin position="125"/>
        <end position="127"/>
    </location>
</feature>
<feature type="strand" evidence="7">
    <location>
        <begin position="133"/>
        <end position="135"/>
    </location>
</feature>
<feature type="strand" evidence="7">
    <location>
        <begin position="139"/>
        <end position="146"/>
    </location>
</feature>
<feature type="strand" evidence="7">
    <location>
        <begin position="151"/>
        <end position="156"/>
    </location>
</feature>
<feature type="strand" evidence="7">
    <location>
        <begin position="162"/>
        <end position="171"/>
    </location>
</feature>
<feature type="helix" evidence="7">
    <location>
        <begin position="174"/>
        <end position="184"/>
    </location>
</feature>
<feature type="helix" evidence="7">
    <location>
        <begin position="191"/>
        <end position="205"/>
    </location>
</feature>
<feature type="turn" evidence="7">
    <location>
        <begin position="212"/>
        <end position="214"/>
    </location>
</feature>
<feature type="strand" evidence="7">
    <location>
        <begin position="215"/>
        <end position="220"/>
    </location>
</feature>
<feature type="strand" evidence="7">
    <location>
        <begin position="222"/>
        <end position="224"/>
    </location>
</feature>
<feature type="helix" evidence="7">
    <location>
        <begin position="231"/>
        <end position="238"/>
    </location>
</feature>
<organism>
    <name type="scientific">Mus musculus</name>
    <name type="common">Mouse</name>
    <dbReference type="NCBI Taxonomy" id="10090"/>
    <lineage>
        <taxon>Eukaryota</taxon>
        <taxon>Metazoa</taxon>
        <taxon>Chordata</taxon>
        <taxon>Craniata</taxon>
        <taxon>Vertebrata</taxon>
        <taxon>Euteleostomi</taxon>
        <taxon>Mammalia</taxon>
        <taxon>Eutheria</taxon>
        <taxon>Euarchontoglires</taxon>
        <taxon>Glires</taxon>
        <taxon>Rodentia</taxon>
        <taxon>Myomorpha</taxon>
        <taxon>Muroidea</taxon>
        <taxon>Muridae</taxon>
        <taxon>Murinae</taxon>
        <taxon>Mus</taxon>
        <taxon>Mus</taxon>
    </lineage>
</organism>
<dbReference type="EMBL" id="AF019661">
    <property type="protein sequence ID" value="AAC69149.1"/>
    <property type="molecule type" value="mRNA"/>
</dbReference>
<dbReference type="EMBL" id="BC010709">
    <property type="protein sequence ID" value="AAH10709.1"/>
    <property type="molecule type" value="mRNA"/>
</dbReference>
<dbReference type="EMBL" id="BC083342">
    <property type="protein sequence ID" value="AAH83342.1"/>
    <property type="molecule type" value="mRNA"/>
</dbReference>
<dbReference type="CCDS" id="CCDS17755.1"/>
<dbReference type="RefSeq" id="NP_036097.1">
    <property type="nucleotide sequence ID" value="NM_011967.3"/>
</dbReference>
<dbReference type="PDB" id="3UNB">
    <property type="method" value="X-ray"/>
    <property type="resolution" value="2.90 A"/>
    <property type="chains" value="D/R/f/t=1-241"/>
</dbReference>
<dbReference type="PDB" id="3UNE">
    <property type="method" value="X-ray"/>
    <property type="resolution" value="3.20 A"/>
    <property type="chains" value="D/R/f/t=1-241"/>
</dbReference>
<dbReference type="PDB" id="3UNF">
    <property type="method" value="X-ray"/>
    <property type="resolution" value="2.90 A"/>
    <property type="chains" value="D/R=1-241"/>
</dbReference>
<dbReference type="PDB" id="3UNH">
    <property type="method" value="X-ray"/>
    <property type="resolution" value="3.20 A"/>
    <property type="chains" value="D/R=1-241"/>
</dbReference>
<dbReference type="PDB" id="8YPK">
    <property type="method" value="EM"/>
    <property type="resolution" value="2.70 A"/>
    <property type="chains" value="H/M=1-241"/>
</dbReference>
<dbReference type="PDB" id="8YVP">
    <property type="method" value="EM"/>
    <property type="resolution" value="2.50 A"/>
    <property type="chains" value="H/M=1-241"/>
</dbReference>
<dbReference type="PDBsum" id="3UNB"/>
<dbReference type="PDBsum" id="3UNE"/>
<dbReference type="PDBsum" id="3UNF"/>
<dbReference type="PDBsum" id="3UNH"/>
<dbReference type="PDBsum" id="8YPK"/>
<dbReference type="PDBsum" id="8YVP"/>
<dbReference type="EMDB" id="EMD-39482"/>
<dbReference type="EMDB" id="EMD-39612"/>
<dbReference type="SMR" id="Q9Z2U1"/>
<dbReference type="BioGRID" id="204993">
    <property type="interactions" value="50"/>
</dbReference>
<dbReference type="CORUM" id="Q9Z2U1"/>
<dbReference type="FunCoup" id="Q9Z2U1">
    <property type="interactions" value="2655"/>
</dbReference>
<dbReference type="IntAct" id="Q9Z2U1">
    <property type="interactions" value="5"/>
</dbReference>
<dbReference type="MINT" id="Q9Z2U1"/>
<dbReference type="STRING" id="10090.ENSMUSP00000088057"/>
<dbReference type="GlyCosmos" id="Q9Z2U1">
    <property type="glycosylation" value="1 site, No reported glycans"/>
</dbReference>
<dbReference type="GlyGen" id="Q9Z2U1">
    <property type="glycosylation" value="1 site, 1 O-linked glycan (1 site)"/>
</dbReference>
<dbReference type="iPTMnet" id="Q9Z2U1"/>
<dbReference type="PhosphoSitePlus" id="Q9Z2U1"/>
<dbReference type="SwissPalm" id="Q9Z2U1"/>
<dbReference type="REPRODUCTION-2DPAGE" id="Q9Z2U1"/>
<dbReference type="CPTAC" id="non-CPTAC-3601"/>
<dbReference type="jPOST" id="Q9Z2U1"/>
<dbReference type="PaxDb" id="10090-ENSMUSP00000088057"/>
<dbReference type="ProteomicsDB" id="291912"/>
<dbReference type="Pumba" id="Q9Z2U1"/>
<dbReference type="Antibodypedia" id="20062">
    <property type="antibodies" value="458 antibodies from 33 providers"/>
</dbReference>
<dbReference type="DNASU" id="26442"/>
<dbReference type="Ensembl" id="ENSMUST00000090569.10">
    <property type="protein sequence ID" value="ENSMUSP00000088057.6"/>
    <property type="gene ID" value="ENSMUSG00000068749.10"/>
</dbReference>
<dbReference type="GeneID" id="26442"/>
<dbReference type="KEGG" id="mmu:26442"/>
<dbReference type="UCSC" id="uc008qyq.1">
    <property type="organism name" value="mouse"/>
</dbReference>
<dbReference type="AGR" id="MGI:1347009"/>
<dbReference type="CTD" id="5686"/>
<dbReference type="MGI" id="MGI:1347009">
    <property type="gene designation" value="Psma5"/>
</dbReference>
<dbReference type="VEuPathDB" id="HostDB:ENSMUSG00000068749"/>
<dbReference type="eggNOG" id="KOG0176">
    <property type="taxonomic scope" value="Eukaryota"/>
</dbReference>
<dbReference type="GeneTree" id="ENSGT00550000074958"/>
<dbReference type="HOGENOM" id="CLU_035750_4_2_1"/>
<dbReference type="InParanoid" id="Q9Z2U1"/>
<dbReference type="OMA" id="RSMIDHA"/>
<dbReference type="OrthoDB" id="431557at2759"/>
<dbReference type="PhylomeDB" id="Q9Z2U1"/>
<dbReference type="TreeFam" id="TF106211"/>
<dbReference type="Reactome" id="R-MMU-1169091">
    <property type="pathway name" value="Activation of NF-kappaB in B cells"/>
</dbReference>
<dbReference type="Reactome" id="R-MMU-1234176">
    <property type="pathway name" value="Oxygen-dependent proline hydroxylation of Hypoxia-inducible Factor Alpha"/>
</dbReference>
<dbReference type="Reactome" id="R-MMU-1236978">
    <property type="pathway name" value="Cross-presentation of soluble exogenous antigens (endosomes)"/>
</dbReference>
<dbReference type="Reactome" id="R-MMU-174084">
    <property type="pathway name" value="Autodegradation of Cdh1 by Cdh1:APC/C"/>
</dbReference>
<dbReference type="Reactome" id="R-MMU-174154">
    <property type="pathway name" value="APC/C:Cdc20 mediated degradation of Securin"/>
</dbReference>
<dbReference type="Reactome" id="R-MMU-174178">
    <property type="pathway name" value="APC/C:Cdh1 mediated degradation of Cdc20 and other APC/C:Cdh1 targeted proteins in late mitosis/early G1"/>
</dbReference>
<dbReference type="Reactome" id="R-MMU-174184">
    <property type="pathway name" value="Cdc20:Phospho-APC/C mediated degradation of Cyclin A"/>
</dbReference>
<dbReference type="Reactome" id="R-MMU-187577">
    <property type="pathway name" value="SCF(Skp2)-mediated degradation of p27/p21"/>
</dbReference>
<dbReference type="Reactome" id="R-MMU-195253">
    <property type="pathway name" value="Degradation of beta-catenin by the destruction complex"/>
</dbReference>
<dbReference type="Reactome" id="R-MMU-202424">
    <property type="pathway name" value="Downstream TCR signaling"/>
</dbReference>
<dbReference type="Reactome" id="R-MMU-2467813">
    <property type="pathway name" value="Separation of Sister Chromatids"/>
</dbReference>
<dbReference type="Reactome" id="R-MMU-2871837">
    <property type="pathway name" value="FCERI mediated NF-kB activation"/>
</dbReference>
<dbReference type="Reactome" id="R-MMU-349425">
    <property type="pathway name" value="Autodegradation of the E3 ubiquitin ligase COP1"/>
</dbReference>
<dbReference type="Reactome" id="R-MMU-350562">
    <property type="pathway name" value="Regulation of ornithine decarboxylase (ODC)"/>
</dbReference>
<dbReference type="Reactome" id="R-MMU-382556">
    <property type="pathway name" value="ABC-family proteins mediated transport"/>
</dbReference>
<dbReference type="Reactome" id="R-MMU-450408">
    <property type="pathway name" value="AUF1 (hnRNP D0) binds and destabilizes mRNA"/>
</dbReference>
<dbReference type="Reactome" id="R-MMU-4608870">
    <property type="pathway name" value="Asymmetric localization of PCP proteins"/>
</dbReference>
<dbReference type="Reactome" id="R-MMU-4641257">
    <property type="pathway name" value="Degradation of AXIN"/>
</dbReference>
<dbReference type="Reactome" id="R-MMU-4641258">
    <property type="pathway name" value="Degradation of DVL"/>
</dbReference>
<dbReference type="Reactome" id="R-MMU-5358346">
    <property type="pathway name" value="Hedgehog ligand biogenesis"/>
</dbReference>
<dbReference type="Reactome" id="R-MMU-5607761">
    <property type="pathway name" value="Dectin-1 mediated noncanonical NF-kB signaling"/>
</dbReference>
<dbReference type="Reactome" id="R-MMU-5607764">
    <property type="pathway name" value="CLEC7A (Dectin-1) signaling"/>
</dbReference>
<dbReference type="Reactome" id="R-MMU-5610780">
    <property type="pathway name" value="Degradation of GLI1 by the proteasome"/>
</dbReference>
<dbReference type="Reactome" id="R-MMU-5610785">
    <property type="pathway name" value="GLI3 is processed to GLI3R by the proteasome"/>
</dbReference>
<dbReference type="Reactome" id="R-MMU-5632684">
    <property type="pathway name" value="Hedgehog 'on' state"/>
</dbReference>
<dbReference type="Reactome" id="R-MMU-5658442">
    <property type="pathway name" value="Regulation of RAS by GAPs"/>
</dbReference>
<dbReference type="Reactome" id="R-MMU-5668541">
    <property type="pathway name" value="TNFR2 non-canonical NF-kB pathway"/>
</dbReference>
<dbReference type="Reactome" id="R-MMU-5676590">
    <property type="pathway name" value="NIK--&gt;noncanonical NF-kB signaling"/>
</dbReference>
<dbReference type="Reactome" id="R-MMU-5687128">
    <property type="pathway name" value="MAPK6/MAPK4 signaling"/>
</dbReference>
<dbReference type="Reactome" id="R-MMU-5689603">
    <property type="pathway name" value="UCH proteinases"/>
</dbReference>
<dbReference type="Reactome" id="R-MMU-5689880">
    <property type="pathway name" value="Ub-specific processing proteases"/>
</dbReference>
<dbReference type="Reactome" id="R-MMU-6798695">
    <property type="pathway name" value="Neutrophil degranulation"/>
</dbReference>
<dbReference type="Reactome" id="R-MMU-68867">
    <property type="pathway name" value="Assembly of the pre-replicative complex"/>
</dbReference>
<dbReference type="Reactome" id="R-MMU-68949">
    <property type="pathway name" value="Orc1 removal from chromatin"/>
</dbReference>
<dbReference type="Reactome" id="R-MMU-69017">
    <property type="pathway name" value="CDK-mediated phosphorylation and removal of Cdc6"/>
</dbReference>
<dbReference type="Reactome" id="R-MMU-69481">
    <property type="pathway name" value="G2/M Checkpoints"/>
</dbReference>
<dbReference type="Reactome" id="R-MMU-69601">
    <property type="pathway name" value="Ubiquitin Mediated Degradation of Phosphorylated Cdc25A"/>
</dbReference>
<dbReference type="Reactome" id="R-MMU-75815">
    <property type="pathway name" value="Ubiquitin-dependent degradation of Cyclin D"/>
</dbReference>
<dbReference type="Reactome" id="R-MMU-8852276">
    <property type="pathway name" value="The role of GTSE1 in G2/M progression after G2 checkpoint"/>
</dbReference>
<dbReference type="Reactome" id="R-MMU-8854050">
    <property type="pathway name" value="FBXL7 down-regulates AURKA during mitotic entry and in early mitosis"/>
</dbReference>
<dbReference type="Reactome" id="R-MMU-8939236">
    <property type="pathway name" value="RUNX1 regulates transcription of genes involved in differentiation of HSCs"/>
</dbReference>
<dbReference type="Reactome" id="R-MMU-8939902">
    <property type="pathway name" value="Regulation of RUNX2 expression and activity"/>
</dbReference>
<dbReference type="Reactome" id="R-MMU-8941858">
    <property type="pathway name" value="Regulation of RUNX3 expression and activity"/>
</dbReference>
<dbReference type="Reactome" id="R-MMU-8948751">
    <property type="pathway name" value="Regulation of PTEN stability and activity"/>
</dbReference>
<dbReference type="Reactome" id="R-MMU-8951664">
    <property type="pathway name" value="Neddylation"/>
</dbReference>
<dbReference type="Reactome" id="R-MMU-9020702">
    <property type="pathway name" value="Interleukin-1 signaling"/>
</dbReference>
<dbReference type="Reactome" id="R-MMU-9755511">
    <property type="pathway name" value="KEAP1-NFE2L2 pathway"/>
</dbReference>
<dbReference type="Reactome" id="R-MMU-9762114">
    <property type="pathway name" value="GSK3B and BTRC:CUL1-mediated-degradation of NFE2L2"/>
</dbReference>
<dbReference type="Reactome" id="R-MMU-983168">
    <property type="pathway name" value="Antigen processing: Ubiquitination &amp; Proteasome degradation"/>
</dbReference>
<dbReference type="Reactome" id="R-MMU-9907900">
    <property type="pathway name" value="Proteasome assembly"/>
</dbReference>
<dbReference type="BioGRID-ORCS" id="26442">
    <property type="hits" value="28 hits in 76 CRISPR screens"/>
</dbReference>
<dbReference type="ChiTaRS" id="Psma5">
    <property type="organism name" value="mouse"/>
</dbReference>
<dbReference type="EvolutionaryTrace" id="Q9Z2U1"/>
<dbReference type="PRO" id="PR:Q9Z2U1"/>
<dbReference type="Proteomes" id="UP000000589">
    <property type="component" value="Chromosome 3"/>
</dbReference>
<dbReference type="RNAct" id="Q9Z2U1">
    <property type="molecule type" value="protein"/>
</dbReference>
<dbReference type="Bgee" id="ENSMUSG00000068749">
    <property type="expression patterns" value="Expressed in mesodermal cell in embryo and 65 other cell types or tissues"/>
</dbReference>
<dbReference type="ExpressionAtlas" id="Q9Z2U1">
    <property type="expression patterns" value="baseline and differential"/>
</dbReference>
<dbReference type="GO" id="GO:0005829">
    <property type="term" value="C:cytosol"/>
    <property type="evidence" value="ECO:0000304"/>
    <property type="project" value="Reactome"/>
</dbReference>
<dbReference type="GO" id="GO:0005654">
    <property type="term" value="C:nucleoplasm"/>
    <property type="evidence" value="ECO:0000304"/>
    <property type="project" value="Reactome"/>
</dbReference>
<dbReference type="GO" id="GO:0005839">
    <property type="term" value="C:proteasome core complex"/>
    <property type="evidence" value="ECO:0000314"/>
    <property type="project" value="UniProtKB"/>
</dbReference>
<dbReference type="GO" id="GO:0019773">
    <property type="term" value="C:proteasome core complex, alpha-subunit complex"/>
    <property type="evidence" value="ECO:0000250"/>
    <property type="project" value="UniProtKB"/>
</dbReference>
<dbReference type="GO" id="GO:0043161">
    <property type="term" value="P:proteasome-mediated ubiquitin-dependent protein catabolic process"/>
    <property type="evidence" value="ECO:0007669"/>
    <property type="project" value="InterPro"/>
</dbReference>
<dbReference type="CDD" id="cd03753">
    <property type="entry name" value="proteasome_alpha_type_5"/>
    <property type="match status" value="1"/>
</dbReference>
<dbReference type="FunFam" id="3.60.20.10:FF:000019">
    <property type="entry name" value="Proteasome subunit alpha type"/>
    <property type="match status" value="1"/>
</dbReference>
<dbReference type="Gene3D" id="3.60.20.10">
    <property type="entry name" value="Glutamine Phosphoribosylpyrophosphate, subunit 1, domain 1"/>
    <property type="match status" value="1"/>
</dbReference>
<dbReference type="InterPro" id="IPR029055">
    <property type="entry name" value="Ntn_hydrolases_N"/>
</dbReference>
<dbReference type="InterPro" id="IPR050115">
    <property type="entry name" value="Proteasome_alpha"/>
</dbReference>
<dbReference type="InterPro" id="IPR023332">
    <property type="entry name" value="Proteasome_alpha-type"/>
</dbReference>
<dbReference type="InterPro" id="IPR033812">
    <property type="entry name" value="Proteasome_alpha_type_5"/>
</dbReference>
<dbReference type="InterPro" id="IPR000426">
    <property type="entry name" value="Proteasome_asu_N"/>
</dbReference>
<dbReference type="InterPro" id="IPR001353">
    <property type="entry name" value="Proteasome_sua/b"/>
</dbReference>
<dbReference type="NCBIfam" id="NF003075">
    <property type="entry name" value="PRK03996.1"/>
    <property type="match status" value="1"/>
</dbReference>
<dbReference type="PANTHER" id="PTHR11599">
    <property type="entry name" value="PROTEASOME SUBUNIT ALPHA/BETA"/>
    <property type="match status" value="1"/>
</dbReference>
<dbReference type="Pfam" id="PF00227">
    <property type="entry name" value="Proteasome"/>
    <property type="match status" value="1"/>
</dbReference>
<dbReference type="Pfam" id="PF10584">
    <property type="entry name" value="Proteasome_A_N"/>
    <property type="match status" value="1"/>
</dbReference>
<dbReference type="SMART" id="SM00948">
    <property type="entry name" value="Proteasome_A_N"/>
    <property type="match status" value="1"/>
</dbReference>
<dbReference type="SUPFAM" id="SSF56235">
    <property type="entry name" value="N-terminal nucleophile aminohydrolases (Ntn hydrolases)"/>
    <property type="match status" value="1"/>
</dbReference>
<dbReference type="PROSITE" id="PS00388">
    <property type="entry name" value="PROTEASOME_ALPHA_1"/>
    <property type="match status" value="1"/>
</dbReference>
<dbReference type="PROSITE" id="PS51475">
    <property type="entry name" value="PROTEASOME_ALPHA_2"/>
    <property type="match status" value="1"/>
</dbReference>
<reference key="1">
    <citation type="journal article" date="1999" name="Immunogenetics">
        <title>The complete primary structure of mouse 20S proteasomes.</title>
        <authorList>
            <person name="Elenich L.A."/>
            <person name="Nandi D."/>
            <person name="Kent E.A."/>
            <person name="McCluskey T.S."/>
            <person name="Cruz M."/>
            <person name="Iyer M.N."/>
            <person name="Woodward E.C."/>
            <person name="Conn C.W."/>
            <person name="Ochoa A.L."/>
            <person name="Ginsburg D.B."/>
            <person name="Monaco J.J."/>
        </authorList>
    </citation>
    <scope>NUCLEOTIDE SEQUENCE [MRNA]</scope>
    <source>
        <strain>B10.A</strain>
    </source>
</reference>
<reference key="2">
    <citation type="journal article" date="2004" name="Genome Res.">
        <title>The status, quality, and expansion of the NIH full-length cDNA project: the Mammalian Gene Collection (MGC).</title>
        <authorList>
            <consortium name="The MGC Project Team"/>
        </authorList>
    </citation>
    <scope>NUCLEOTIDE SEQUENCE [LARGE SCALE MRNA]</scope>
    <source>
        <strain>C57BL/6J</strain>
        <strain>FVB/N</strain>
        <tissue>Brain</tissue>
        <tissue>Mammary tumor</tissue>
    </source>
</reference>
<reference key="3">
    <citation type="submission" date="2007-07" db="UniProtKB">
        <authorList>
            <person name="Lubec G."/>
            <person name="Yang J.W."/>
            <person name="Zigmond M."/>
        </authorList>
    </citation>
    <scope>PROTEIN SEQUENCE OF 21-32</scope>
    <source>
        <tissue>Brain</tissue>
    </source>
</reference>
<reference key="4">
    <citation type="journal article" date="2006" name="Mol. Cell. Biol.">
        <title>Proteasome activator PA200 is required for normal spermatogenesis.</title>
        <authorList>
            <person name="Khor B."/>
            <person name="Bredemeyer A.L."/>
            <person name="Huang C.-Y."/>
            <person name="Turnbull I.R."/>
            <person name="Evans R."/>
            <person name="Maggi L.B. Jr."/>
            <person name="White J.M."/>
            <person name="Walker L.M."/>
            <person name="Carnes K."/>
            <person name="Hess R.A."/>
            <person name="Sleckman B.P."/>
        </authorList>
    </citation>
    <scope>FUNCTION</scope>
</reference>
<reference key="5">
    <citation type="journal article" date="2010" name="Cell">
        <title>A tissue-specific atlas of mouse protein phosphorylation and expression.</title>
        <authorList>
            <person name="Huttlin E.L."/>
            <person name="Jedrychowski M.P."/>
            <person name="Elias J.E."/>
            <person name="Goswami T."/>
            <person name="Rad R."/>
            <person name="Beausoleil S.A."/>
            <person name="Villen J."/>
            <person name="Haas W."/>
            <person name="Sowa M.E."/>
            <person name="Gygi S.P."/>
        </authorList>
    </citation>
    <scope>IDENTIFICATION BY MASS SPECTROMETRY [LARGE SCALE ANALYSIS]</scope>
    <source>
        <tissue>Brain</tissue>
        <tissue>Brown adipose tissue</tissue>
        <tissue>Heart</tissue>
        <tissue>Kidney</tissue>
        <tissue>Liver</tissue>
        <tissue>Lung</tissue>
        <tissue>Pancreas</tissue>
        <tissue>Spleen</tissue>
        <tissue>Testis</tissue>
    </source>
</reference>
<reference key="6">
    <citation type="journal article" date="2012" name="Mol. Cell. Proteomics">
        <title>Mapping of O-GlcNAc sites of 20 S proteasome subunits and Hsp90 by a novel biotin-cystamine tag.</title>
        <authorList>
            <person name="Overath T."/>
            <person name="Kuckelkorn U."/>
            <person name="Henklein P."/>
            <person name="Strehl B."/>
            <person name="Bonar D."/>
            <person name="Kloss A."/>
            <person name="Siele D."/>
            <person name="Kloetzel P.M."/>
            <person name="Janek K."/>
        </authorList>
    </citation>
    <scope>GLYCOSYLATION AT SER-198</scope>
    <source>
        <tissue>Brain</tissue>
        <tissue>Spleen</tissue>
    </source>
</reference>
<reference key="7">
    <citation type="journal article" date="2006" name="Circ. Res.">
        <title>Mapping the murine cardiac 26S proteasome complexes.</title>
        <authorList>
            <person name="Gomes A.V."/>
            <person name="Zong C."/>
            <person name="Edmondson R.D."/>
            <person name="Li X."/>
            <person name="Stefani E."/>
            <person name="Zhang J."/>
            <person name="Jones R.C."/>
            <person name="Thyparambil S."/>
            <person name="Wang G.W."/>
            <person name="Qiao X."/>
            <person name="Bardag-Gorce F."/>
            <person name="Ping P."/>
        </authorList>
    </citation>
    <scope>IDENTIFICATION IN THE 20S PROTEASOME CORE COMPLEX</scope>
    <scope>ACETYLATION AT MET-1</scope>
</reference>
<reference key="8">
    <citation type="journal article" date="2012" name="Cell">
        <title>Immuno- and constitutive proteasome crystal structures reveal differences in substrate and inhibitor specificity.</title>
        <authorList>
            <person name="Huber E.M."/>
            <person name="Basler M."/>
            <person name="Schwab R."/>
            <person name="Heinemeyer W."/>
            <person name="Kirk C.J."/>
            <person name="Groettrup M."/>
            <person name="Groll M."/>
        </authorList>
    </citation>
    <scope>X-RAY CRYSTALLOGRAPHY (2.90 ANGSTROMS) OF 20S IMMUNOPROTEASOME</scope>
    <scope>SUBUNIT</scope>
    <scope>FUNCTION</scope>
    <scope>TISSUE SPECIFICITY</scope>
</reference>
<sequence length="241" mass="26411">MFLTRSEYDRGVNTFSPEGRLFQVEYAIEAIKLGSTAIGIQTSEGVCLAVEKRITSPLMEPSSIEKIVEIDAHIGCAMSGLIADAKTLIDKARVETQNHWFTYNETMTVESVTQAVSNLALQFGEEDADPGAMSRPFGVALLFGGVDEKGPQLFHMDPSGTFVQCDARAIGSASEGAQSSLQEVYHKSMTLKEAIKSSLIILKQVMEEKLNATNIELATVQPGQNFHMFTKEELEEVIKDI</sequence>
<accession>Q9Z2U1</accession>
<name>PSA5_MOUSE</name>
<keyword id="KW-0002">3D-structure</keyword>
<keyword id="KW-0007">Acetylation</keyword>
<keyword id="KW-0963">Cytoplasm</keyword>
<keyword id="KW-0903">Direct protein sequencing</keyword>
<keyword id="KW-0325">Glycoprotein</keyword>
<keyword id="KW-0539">Nucleus</keyword>
<keyword id="KW-0597">Phosphoprotein</keyword>
<keyword id="KW-0647">Proteasome</keyword>
<keyword id="KW-1185">Reference proteome</keyword>
<evidence type="ECO:0000250" key="1">
    <source>
        <dbReference type="UniProtKB" id="P28066"/>
    </source>
</evidence>
<evidence type="ECO:0000255" key="2">
    <source>
        <dbReference type="PROSITE-ProRule" id="PRU00808"/>
    </source>
</evidence>
<evidence type="ECO:0000269" key="3">
    <source>
    </source>
</evidence>
<evidence type="ECO:0000269" key="4">
    <source>
    </source>
</evidence>
<evidence type="ECO:0000269" key="5">
    <source>
    </source>
</evidence>
<evidence type="ECO:0000269" key="6">
    <source>
    </source>
</evidence>
<evidence type="ECO:0007829" key="7">
    <source>
        <dbReference type="PDB" id="3UNB"/>
    </source>
</evidence>
<evidence type="ECO:0007829" key="8">
    <source>
        <dbReference type="PDB" id="3UNF"/>
    </source>
</evidence>
<proteinExistence type="evidence at protein level"/>